<organism>
    <name type="scientific">Salmonella dublin (strain CT_02021853)</name>
    <dbReference type="NCBI Taxonomy" id="439851"/>
    <lineage>
        <taxon>Bacteria</taxon>
        <taxon>Pseudomonadati</taxon>
        <taxon>Pseudomonadota</taxon>
        <taxon>Gammaproteobacteria</taxon>
        <taxon>Enterobacterales</taxon>
        <taxon>Enterobacteriaceae</taxon>
        <taxon>Salmonella</taxon>
    </lineage>
</organism>
<sequence length="513" mass="55113">MQLNSTEISELIKQRIAQFNVVSEAHNEGTIVSVSDGVIRIHGLADCMQGEMISLPGNRYAIALNLERDSVGAVVMGPYADLAEGMKVKCTGRILEVPVGRGLLGRVVNTLGAPIDGKGPVDNDGFSAVEAIAPGVIDRQSVDQPVQTGYKAVDSMIPIGRGQRELIIGDRQTGKTALAIDAIINQRDSGIKCIYVAIGQKASTISNVVRKLEEHGALANTIVVVATASESAALQYLAPYAGCAMGEYFRDRGEDALIIYDDLSKQAVAYRQISLLLRRPPGREAFPGDVFYLHSRLLERAARVNADYVEAFTKGEVKGKTGSLTALPIIETQAGDVSAFVPTNVISITDGQIFLESNLFNAGIRPAVNPGISVSRVGGAAQTKIMKKLSGGIRTALAQYRELAAFSQFASDLDDATRKQLDHGQKVTELLKQKQYAPMSVAQQSLVLFAAERGYLADVELAKIGSFEAALLAYVDRDHAPLMQEINQSGGYNDEIEGKLKGILDSFKATQSW</sequence>
<dbReference type="EC" id="7.1.2.2" evidence="1"/>
<dbReference type="EMBL" id="CP001144">
    <property type="protein sequence ID" value="ACH77878.1"/>
    <property type="molecule type" value="Genomic_DNA"/>
</dbReference>
<dbReference type="RefSeq" id="WP_001176751.1">
    <property type="nucleotide sequence ID" value="NC_011205.1"/>
</dbReference>
<dbReference type="SMR" id="B5FN35"/>
<dbReference type="GeneID" id="66758156"/>
<dbReference type="KEGG" id="sed:SeD_A4257"/>
<dbReference type="HOGENOM" id="CLU_010091_2_1_6"/>
<dbReference type="Proteomes" id="UP000008322">
    <property type="component" value="Chromosome"/>
</dbReference>
<dbReference type="GO" id="GO:0005886">
    <property type="term" value="C:plasma membrane"/>
    <property type="evidence" value="ECO:0007669"/>
    <property type="project" value="UniProtKB-SubCell"/>
</dbReference>
<dbReference type="GO" id="GO:0045259">
    <property type="term" value="C:proton-transporting ATP synthase complex"/>
    <property type="evidence" value="ECO:0007669"/>
    <property type="project" value="UniProtKB-KW"/>
</dbReference>
<dbReference type="GO" id="GO:0043531">
    <property type="term" value="F:ADP binding"/>
    <property type="evidence" value="ECO:0007669"/>
    <property type="project" value="TreeGrafter"/>
</dbReference>
<dbReference type="GO" id="GO:0005524">
    <property type="term" value="F:ATP binding"/>
    <property type="evidence" value="ECO:0007669"/>
    <property type="project" value="UniProtKB-UniRule"/>
</dbReference>
<dbReference type="GO" id="GO:0046933">
    <property type="term" value="F:proton-transporting ATP synthase activity, rotational mechanism"/>
    <property type="evidence" value="ECO:0007669"/>
    <property type="project" value="UniProtKB-UniRule"/>
</dbReference>
<dbReference type="CDD" id="cd18113">
    <property type="entry name" value="ATP-synt_F1_alpha_C"/>
    <property type="match status" value="1"/>
</dbReference>
<dbReference type="CDD" id="cd18116">
    <property type="entry name" value="ATP-synt_F1_alpha_N"/>
    <property type="match status" value="1"/>
</dbReference>
<dbReference type="CDD" id="cd01132">
    <property type="entry name" value="F1-ATPase_alpha_CD"/>
    <property type="match status" value="1"/>
</dbReference>
<dbReference type="FunFam" id="1.20.150.20:FF:000001">
    <property type="entry name" value="ATP synthase subunit alpha"/>
    <property type="match status" value="1"/>
</dbReference>
<dbReference type="FunFam" id="2.40.30.20:FF:000001">
    <property type="entry name" value="ATP synthase subunit alpha"/>
    <property type="match status" value="1"/>
</dbReference>
<dbReference type="FunFam" id="3.40.50.300:FF:000002">
    <property type="entry name" value="ATP synthase subunit alpha"/>
    <property type="match status" value="1"/>
</dbReference>
<dbReference type="Gene3D" id="2.40.30.20">
    <property type="match status" value="1"/>
</dbReference>
<dbReference type="Gene3D" id="1.20.150.20">
    <property type="entry name" value="ATP synthase alpha/beta chain, C-terminal domain"/>
    <property type="match status" value="1"/>
</dbReference>
<dbReference type="Gene3D" id="3.40.50.300">
    <property type="entry name" value="P-loop containing nucleotide triphosphate hydrolases"/>
    <property type="match status" value="1"/>
</dbReference>
<dbReference type="HAMAP" id="MF_01346">
    <property type="entry name" value="ATP_synth_alpha_bact"/>
    <property type="match status" value="1"/>
</dbReference>
<dbReference type="InterPro" id="IPR023366">
    <property type="entry name" value="ATP_synth_asu-like_sf"/>
</dbReference>
<dbReference type="InterPro" id="IPR000793">
    <property type="entry name" value="ATP_synth_asu_C"/>
</dbReference>
<dbReference type="InterPro" id="IPR038376">
    <property type="entry name" value="ATP_synth_asu_C_sf"/>
</dbReference>
<dbReference type="InterPro" id="IPR033732">
    <property type="entry name" value="ATP_synth_F1_a_nt-bd_dom"/>
</dbReference>
<dbReference type="InterPro" id="IPR005294">
    <property type="entry name" value="ATP_synth_F1_asu"/>
</dbReference>
<dbReference type="InterPro" id="IPR020003">
    <property type="entry name" value="ATPase_a/bsu_AS"/>
</dbReference>
<dbReference type="InterPro" id="IPR004100">
    <property type="entry name" value="ATPase_F1/V1/A1_a/bsu_N"/>
</dbReference>
<dbReference type="InterPro" id="IPR036121">
    <property type="entry name" value="ATPase_F1/V1/A1_a/bsu_N_sf"/>
</dbReference>
<dbReference type="InterPro" id="IPR000194">
    <property type="entry name" value="ATPase_F1/V1/A1_a/bsu_nucl-bd"/>
</dbReference>
<dbReference type="InterPro" id="IPR027417">
    <property type="entry name" value="P-loop_NTPase"/>
</dbReference>
<dbReference type="NCBIfam" id="TIGR00962">
    <property type="entry name" value="atpA"/>
    <property type="match status" value="1"/>
</dbReference>
<dbReference type="NCBIfam" id="NF009884">
    <property type="entry name" value="PRK13343.1"/>
    <property type="match status" value="1"/>
</dbReference>
<dbReference type="PANTHER" id="PTHR48082">
    <property type="entry name" value="ATP SYNTHASE SUBUNIT ALPHA, MITOCHONDRIAL"/>
    <property type="match status" value="1"/>
</dbReference>
<dbReference type="PANTHER" id="PTHR48082:SF2">
    <property type="entry name" value="ATP SYNTHASE SUBUNIT ALPHA, MITOCHONDRIAL"/>
    <property type="match status" value="1"/>
</dbReference>
<dbReference type="Pfam" id="PF00006">
    <property type="entry name" value="ATP-synt_ab"/>
    <property type="match status" value="1"/>
</dbReference>
<dbReference type="Pfam" id="PF00306">
    <property type="entry name" value="ATP-synt_ab_C"/>
    <property type="match status" value="1"/>
</dbReference>
<dbReference type="Pfam" id="PF02874">
    <property type="entry name" value="ATP-synt_ab_N"/>
    <property type="match status" value="1"/>
</dbReference>
<dbReference type="SUPFAM" id="SSF47917">
    <property type="entry name" value="C-terminal domain of alpha and beta subunits of F1 ATP synthase"/>
    <property type="match status" value="1"/>
</dbReference>
<dbReference type="SUPFAM" id="SSF50615">
    <property type="entry name" value="N-terminal domain of alpha and beta subunits of F1 ATP synthase"/>
    <property type="match status" value="1"/>
</dbReference>
<dbReference type="SUPFAM" id="SSF52540">
    <property type="entry name" value="P-loop containing nucleoside triphosphate hydrolases"/>
    <property type="match status" value="1"/>
</dbReference>
<dbReference type="PROSITE" id="PS00152">
    <property type="entry name" value="ATPASE_ALPHA_BETA"/>
    <property type="match status" value="1"/>
</dbReference>
<evidence type="ECO:0000255" key="1">
    <source>
        <dbReference type="HAMAP-Rule" id="MF_01346"/>
    </source>
</evidence>
<comment type="function">
    <text evidence="1">Produces ATP from ADP in the presence of a proton gradient across the membrane. The alpha chain is a regulatory subunit.</text>
</comment>
<comment type="catalytic activity">
    <reaction evidence="1">
        <text>ATP + H2O + 4 H(+)(in) = ADP + phosphate + 5 H(+)(out)</text>
        <dbReference type="Rhea" id="RHEA:57720"/>
        <dbReference type="ChEBI" id="CHEBI:15377"/>
        <dbReference type="ChEBI" id="CHEBI:15378"/>
        <dbReference type="ChEBI" id="CHEBI:30616"/>
        <dbReference type="ChEBI" id="CHEBI:43474"/>
        <dbReference type="ChEBI" id="CHEBI:456216"/>
        <dbReference type="EC" id="7.1.2.2"/>
    </reaction>
</comment>
<comment type="subunit">
    <text evidence="1">F-type ATPases have 2 components, CF(1) - the catalytic core - and CF(0) - the membrane proton channel. CF(1) has five subunits: alpha(3), beta(3), gamma(1), delta(1), epsilon(1). CF(0) has three main subunits: a(1), b(2) and c(9-12). The alpha and beta chains form an alternating ring which encloses part of the gamma chain. CF(1) is attached to CF(0) by a central stalk formed by the gamma and epsilon chains, while a peripheral stalk is formed by the delta and b chains.</text>
</comment>
<comment type="subcellular location">
    <subcellularLocation>
        <location evidence="1">Cell inner membrane</location>
        <topology evidence="1">Peripheral membrane protein</topology>
    </subcellularLocation>
</comment>
<comment type="similarity">
    <text evidence="1">Belongs to the ATPase alpha/beta chains family.</text>
</comment>
<protein>
    <recommendedName>
        <fullName evidence="1">ATP synthase subunit alpha</fullName>
        <ecNumber evidence="1">7.1.2.2</ecNumber>
    </recommendedName>
    <alternativeName>
        <fullName evidence="1">ATP synthase F1 sector subunit alpha</fullName>
    </alternativeName>
    <alternativeName>
        <fullName evidence="1">F-ATPase subunit alpha</fullName>
    </alternativeName>
</protein>
<proteinExistence type="inferred from homology"/>
<reference key="1">
    <citation type="journal article" date="2011" name="J. Bacteriol.">
        <title>Comparative genomics of 28 Salmonella enterica isolates: evidence for CRISPR-mediated adaptive sublineage evolution.</title>
        <authorList>
            <person name="Fricke W.F."/>
            <person name="Mammel M.K."/>
            <person name="McDermott P.F."/>
            <person name="Tartera C."/>
            <person name="White D.G."/>
            <person name="Leclerc J.E."/>
            <person name="Ravel J."/>
            <person name="Cebula T.A."/>
        </authorList>
    </citation>
    <scope>NUCLEOTIDE SEQUENCE [LARGE SCALE GENOMIC DNA]</scope>
    <source>
        <strain>CT_02021853</strain>
    </source>
</reference>
<name>ATPA_SALDC</name>
<gene>
    <name evidence="1" type="primary">atpA</name>
    <name type="ordered locus">SeD_A4257</name>
</gene>
<accession>B5FN35</accession>
<feature type="chain" id="PRO_1000143429" description="ATP synthase subunit alpha">
    <location>
        <begin position="1"/>
        <end position="513"/>
    </location>
</feature>
<feature type="binding site" evidence="1">
    <location>
        <begin position="169"/>
        <end position="176"/>
    </location>
    <ligand>
        <name>ATP</name>
        <dbReference type="ChEBI" id="CHEBI:30616"/>
    </ligand>
</feature>
<feature type="site" description="Required for activity" evidence="1">
    <location>
        <position position="373"/>
    </location>
</feature>
<keyword id="KW-0066">ATP synthesis</keyword>
<keyword id="KW-0067">ATP-binding</keyword>
<keyword id="KW-0997">Cell inner membrane</keyword>
<keyword id="KW-1003">Cell membrane</keyword>
<keyword id="KW-0139">CF(1)</keyword>
<keyword id="KW-0375">Hydrogen ion transport</keyword>
<keyword id="KW-0406">Ion transport</keyword>
<keyword id="KW-0472">Membrane</keyword>
<keyword id="KW-0547">Nucleotide-binding</keyword>
<keyword id="KW-1278">Translocase</keyword>
<keyword id="KW-0813">Transport</keyword>